<keyword id="KW-0997">Cell inner membrane</keyword>
<keyword id="KW-1003">Cell membrane</keyword>
<keyword id="KW-0350">Heme biosynthesis</keyword>
<keyword id="KW-0472">Membrane</keyword>
<keyword id="KW-0808">Transferase</keyword>
<keyword id="KW-0812">Transmembrane</keyword>
<keyword id="KW-1133">Transmembrane helix</keyword>
<evidence type="ECO:0000255" key="1">
    <source>
        <dbReference type="HAMAP-Rule" id="MF_00154"/>
    </source>
</evidence>
<gene>
    <name evidence="1" type="primary">ctaB</name>
    <name type="ordered locus">P9515_05101</name>
</gene>
<feature type="chain" id="PRO_0000327119" description="Protoheme IX farnesyltransferase">
    <location>
        <begin position="1"/>
        <end position="332"/>
    </location>
</feature>
<feature type="transmembrane region" description="Helical" evidence="1">
    <location>
        <begin position="63"/>
        <end position="83"/>
    </location>
</feature>
<feature type="transmembrane region" description="Helical" evidence="1">
    <location>
        <begin position="109"/>
        <end position="129"/>
    </location>
</feature>
<feature type="transmembrane region" description="Helical" evidence="1">
    <location>
        <begin position="132"/>
        <end position="152"/>
    </location>
</feature>
<feature type="transmembrane region" description="Helical" evidence="1">
    <location>
        <begin position="160"/>
        <end position="180"/>
    </location>
</feature>
<feature type="transmembrane region" description="Helical" evidence="1">
    <location>
        <begin position="188"/>
        <end position="208"/>
    </location>
</feature>
<feature type="transmembrane region" description="Helical" evidence="1">
    <location>
        <begin position="245"/>
        <end position="265"/>
    </location>
</feature>
<feature type="transmembrane region" description="Helical" evidence="1">
    <location>
        <begin position="286"/>
        <end position="306"/>
    </location>
</feature>
<comment type="function">
    <text evidence="1">Converts heme B (protoheme IX) to heme O by substitution of the vinyl group on carbon 2 of heme B porphyrin ring with a hydroxyethyl farnesyl side group.</text>
</comment>
<comment type="catalytic activity">
    <reaction evidence="1">
        <text>heme b + (2E,6E)-farnesyl diphosphate + H2O = Fe(II)-heme o + diphosphate</text>
        <dbReference type="Rhea" id="RHEA:28070"/>
        <dbReference type="ChEBI" id="CHEBI:15377"/>
        <dbReference type="ChEBI" id="CHEBI:33019"/>
        <dbReference type="ChEBI" id="CHEBI:60344"/>
        <dbReference type="ChEBI" id="CHEBI:60530"/>
        <dbReference type="ChEBI" id="CHEBI:175763"/>
        <dbReference type="EC" id="2.5.1.141"/>
    </reaction>
</comment>
<comment type="pathway">
    <text evidence="1">Porphyrin-containing compound metabolism; heme O biosynthesis; heme O from protoheme: step 1/1.</text>
</comment>
<comment type="subcellular location">
    <subcellularLocation>
        <location evidence="1">Cell inner membrane</location>
        <topology evidence="1">Multi-pass membrane protein</topology>
    </subcellularLocation>
</comment>
<comment type="miscellaneous">
    <text evidence="1">Carbon 2 of the heme B porphyrin ring is defined according to the Fischer nomenclature.</text>
</comment>
<comment type="similarity">
    <text evidence="1">Belongs to the UbiA prenyltransferase family. Protoheme IX farnesyltransferase subfamily.</text>
</comment>
<accession>A2BVA8</accession>
<organism>
    <name type="scientific">Prochlorococcus marinus (strain MIT 9515)</name>
    <dbReference type="NCBI Taxonomy" id="167542"/>
    <lineage>
        <taxon>Bacteria</taxon>
        <taxon>Bacillati</taxon>
        <taxon>Cyanobacteriota</taxon>
        <taxon>Cyanophyceae</taxon>
        <taxon>Synechococcales</taxon>
        <taxon>Prochlorococcaceae</taxon>
        <taxon>Prochlorococcus</taxon>
    </lineage>
</organism>
<proteinExistence type="inferred from homology"/>
<protein>
    <recommendedName>
        <fullName evidence="1">Protoheme IX farnesyltransferase</fullName>
        <ecNumber evidence="1">2.5.1.141</ecNumber>
    </recommendedName>
    <alternativeName>
        <fullName evidence="1">Heme B farnesyltransferase</fullName>
    </alternativeName>
    <alternativeName>
        <fullName evidence="1">Heme O synthase</fullName>
    </alternativeName>
</protein>
<name>COXX_PROM5</name>
<sequence>MKSNLENFNFQTSIREQVVPSRKKVILPAWLEVAKPRLIPLLLATTLGGMALTEEWPLSSPKLICTLGGGALAAAAAGALNCLWEMDLDKRMKRTSNRALPSGKLSFNTVFLGAVSCTFAAAMLLISGVNYLAAGLTLLGLCSYVILYTIILKPRTTQNIVFGGVAGAIPPLVGASAATGHVGLSGWWLFGLVMLWTPAHFWALAILLKDDYASVGIPMLPSVKGSAFTVKAISRYGWATVFMSILGVFALPEGGLLYVIMLLPFNGRLLQLINRLKSSPDDLEKAKGLFRWSILYMFGICLLLLISRTQLSVDFEQQSMQIFLSLKAYFNI</sequence>
<dbReference type="EC" id="2.5.1.141" evidence="1"/>
<dbReference type="EMBL" id="CP000552">
    <property type="protein sequence ID" value="ABM71719.1"/>
    <property type="molecule type" value="Genomic_DNA"/>
</dbReference>
<dbReference type="RefSeq" id="WP_011819827.1">
    <property type="nucleotide sequence ID" value="NC_008817.1"/>
</dbReference>
<dbReference type="SMR" id="A2BVA8"/>
<dbReference type="STRING" id="167542.P9515_05101"/>
<dbReference type="GeneID" id="60200629"/>
<dbReference type="KEGG" id="pmc:P9515_05101"/>
<dbReference type="eggNOG" id="COG0109">
    <property type="taxonomic scope" value="Bacteria"/>
</dbReference>
<dbReference type="HOGENOM" id="CLU_029631_0_2_3"/>
<dbReference type="OrthoDB" id="9814417at2"/>
<dbReference type="UniPathway" id="UPA00834">
    <property type="reaction ID" value="UER00712"/>
</dbReference>
<dbReference type="Proteomes" id="UP000001589">
    <property type="component" value="Chromosome"/>
</dbReference>
<dbReference type="GO" id="GO:0005886">
    <property type="term" value="C:plasma membrane"/>
    <property type="evidence" value="ECO:0007669"/>
    <property type="project" value="UniProtKB-SubCell"/>
</dbReference>
<dbReference type="GO" id="GO:0008495">
    <property type="term" value="F:protoheme IX farnesyltransferase activity"/>
    <property type="evidence" value="ECO:0007669"/>
    <property type="project" value="UniProtKB-UniRule"/>
</dbReference>
<dbReference type="GO" id="GO:0048034">
    <property type="term" value="P:heme O biosynthetic process"/>
    <property type="evidence" value="ECO:0007669"/>
    <property type="project" value="UniProtKB-UniRule"/>
</dbReference>
<dbReference type="CDD" id="cd13957">
    <property type="entry name" value="PT_UbiA_Cox10"/>
    <property type="match status" value="1"/>
</dbReference>
<dbReference type="Gene3D" id="1.10.357.140">
    <property type="entry name" value="UbiA prenyltransferase"/>
    <property type="match status" value="1"/>
</dbReference>
<dbReference type="HAMAP" id="MF_00154">
    <property type="entry name" value="CyoE_CtaB"/>
    <property type="match status" value="1"/>
</dbReference>
<dbReference type="InterPro" id="IPR006369">
    <property type="entry name" value="Protohaem_IX_farnesylTrfase"/>
</dbReference>
<dbReference type="InterPro" id="IPR000537">
    <property type="entry name" value="UbiA_prenyltransferase"/>
</dbReference>
<dbReference type="InterPro" id="IPR030470">
    <property type="entry name" value="UbiA_prenylTrfase_CS"/>
</dbReference>
<dbReference type="InterPro" id="IPR044878">
    <property type="entry name" value="UbiA_sf"/>
</dbReference>
<dbReference type="NCBIfam" id="TIGR01473">
    <property type="entry name" value="cyoE_ctaB"/>
    <property type="match status" value="1"/>
</dbReference>
<dbReference type="NCBIfam" id="NF003349">
    <property type="entry name" value="PRK04375.1-2"/>
    <property type="match status" value="1"/>
</dbReference>
<dbReference type="PANTHER" id="PTHR43448:SF7">
    <property type="entry name" value="4-HYDROXYBENZOATE SOLANESYLTRANSFERASE"/>
    <property type="match status" value="1"/>
</dbReference>
<dbReference type="PANTHER" id="PTHR43448">
    <property type="entry name" value="PROTOHEME IX FARNESYLTRANSFERASE, MITOCHONDRIAL"/>
    <property type="match status" value="1"/>
</dbReference>
<dbReference type="Pfam" id="PF01040">
    <property type="entry name" value="UbiA"/>
    <property type="match status" value="1"/>
</dbReference>
<dbReference type="PROSITE" id="PS00943">
    <property type="entry name" value="UBIA"/>
    <property type="match status" value="1"/>
</dbReference>
<reference key="1">
    <citation type="journal article" date="2007" name="PLoS Genet.">
        <title>Patterns and implications of gene gain and loss in the evolution of Prochlorococcus.</title>
        <authorList>
            <person name="Kettler G.C."/>
            <person name="Martiny A.C."/>
            <person name="Huang K."/>
            <person name="Zucker J."/>
            <person name="Coleman M.L."/>
            <person name="Rodrigue S."/>
            <person name="Chen F."/>
            <person name="Lapidus A."/>
            <person name="Ferriera S."/>
            <person name="Johnson J."/>
            <person name="Steglich C."/>
            <person name="Church G.M."/>
            <person name="Richardson P."/>
            <person name="Chisholm S.W."/>
        </authorList>
    </citation>
    <scope>NUCLEOTIDE SEQUENCE [LARGE SCALE GENOMIC DNA]</scope>
    <source>
        <strain>MIT 9515</strain>
    </source>
</reference>